<dbReference type="EMBL" id="BX293980">
    <property type="protein sequence ID" value="CAE76931.1"/>
    <property type="molecule type" value="Genomic_DNA"/>
</dbReference>
<dbReference type="RefSeq" id="NP_975289.1">
    <property type="nucleotide sequence ID" value="NC_005364.2"/>
</dbReference>
<dbReference type="RefSeq" id="WP_011166487.1">
    <property type="nucleotide sequence ID" value="NC_005364.2"/>
</dbReference>
<dbReference type="SMR" id="Q6MTV5"/>
<dbReference type="STRING" id="272632.MSC_0290"/>
<dbReference type="KEGG" id="mmy:MSC_0290"/>
<dbReference type="PATRIC" id="fig|272632.4.peg.310"/>
<dbReference type="eggNOG" id="COG0218">
    <property type="taxonomic scope" value="Bacteria"/>
</dbReference>
<dbReference type="HOGENOM" id="CLU_033732_1_0_14"/>
<dbReference type="Proteomes" id="UP000001016">
    <property type="component" value="Chromosome"/>
</dbReference>
<dbReference type="GO" id="GO:0005829">
    <property type="term" value="C:cytosol"/>
    <property type="evidence" value="ECO:0007669"/>
    <property type="project" value="TreeGrafter"/>
</dbReference>
<dbReference type="GO" id="GO:0005525">
    <property type="term" value="F:GTP binding"/>
    <property type="evidence" value="ECO:0007669"/>
    <property type="project" value="UniProtKB-UniRule"/>
</dbReference>
<dbReference type="GO" id="GO:0046872">
    <property type="term" value="F:metal ion binding"/>
    <property type="evidence" value="ECO:0007669"/>
    <property type="project" value="UniProtKB-KW"/>
</dbReference>
<dbReference type="GO" id="GO:0000917">
    <property type="term" value="P:division septum assembly"/>
    <property type="evidence" value="ECO:0007669"/>
    <property type="project" value="UniProtKB-KW"/>
</dbReference>
<dbReference type="CDD" id="cd01876">
    <property type="entry name" value="YihA_EngB"/>
    <property type="match status" value="1"/>
</dbReference>
<dbReference type="FunFam" id="3.40.50.300:FF:000098">
    <property type="entry name" value="Probable GTP-binding protein EngB"/>
    <property type="match status" value="1"/>
</dbReference>
<dbReference type="Gene3D" id="3.40.50.300">
    <property type="entry name" value="P-loop containing nucleotide triphosphate hydrolases"/>
    <property type="match status" value="1"/>
</dbReference>
<dbReference type="HAMAP" id="MF_00321">
    <property type="entry name" value="GTPase_EngB"/>
    <property type="match status" value="1"/>
</dbReference>
<dbReference type="InterPro" id="IPR030393">
    <property type="entry name" value="G_ENGB_dom"/>
</dbReference>
<dbReference type="InterPro" id="IPR006073">
    <property type="entry name" value="GTP-bd"/>
</dbReference>
<dbReference type="InterPro" id="IPR019987">
    <property type="entry name" value="GTP-bd_ribosome_bio_YsxC"/>
</dbReference>
<dbReference type="InterPro" id="IPR027417">
    <property type="entry name" value="P-loop_NTPase"/>
</dbReference>
<dbReference type="NCBIfam" id="TIGR03598">
    <property type="entry name" value="GTPase_YsxC"/>
    <property type="match status" value="1"/>
</dbReference>
<dbReference type="PANTHER" id="PTHR11649:SF13">
    <property type="entry name" value="ENGB-TYPE G DOMAIN-CONTAINING PROTEIN"/>
    <property type="match status" value="1"/>
</dbReference>
<dbReference type="PANTHER" id="PTHR11649">
    <property type="entry name" value="MSS1/TRME-RELATED GTP-BINDING PROTEIN"/>
    <property type="match status" value="1"/>
</dbReference>
<dbReference type="Pfam" id="PF01926">
    <property type="entry name" value="MMR_HSR1"/>
    <property type="match status" value="1"/>
</dbReference>
<dbReference type="PRINTS" id="PR00449">
    <property type="entry name" value="RASTRNSFRMNG"/>
</dbReference>
<dbReference type="SUPFAM" id="SSF52540">
    <property type="entry name" value="P-loop containing nucleoside triphosphate hydrolases"/>
    <property type="match status" value="1"/>
</dbReference>
<dbReference type="PROSITE" id="PS51706">
    <property type="entry name" value="G_ENGB"/>
    <property type="match status" value="1"/>
</dbReference>
<sequence>MIKQASFITSSANKSNWIDDDVSEICLIGRSNVGKSSFINSLTNNNKLAKISNTPGKTRLLNFFEINKGEYRLVDAPGYGYAKVDDNLKIQFAKMMEEYFINRRNLKGVFLLLDLRHKPSNDDIMMYQFLKHYNIPVVIIGTKLDKLKKSEYVKNEKMIKETISFYQEDDFVKISNLNKTNIIKCYELIDKLLGSK</sequence>
<reference key="1">
    <citation type="journal article" date="2004" name="Genome Res.">
        <title>The genome sequence of Mycoplasma mycoides subsp. mycoides SC type strain PG1T, the causative agent of contagious bovine pleuropneumonia (CBPP).</title>
        <authorList>
            <person name="Westberg J."/>
            <person name="Persson A."/>
            <person name="Holmberg A."/>
            <person name="Goesmann A."/>
            <person name="Lundeberg J."/>
            <person name="Johansson K.-E."/>
            <person name="Pettersson B."/>
            <person name="Uhlen M."/>
        </authorList>
    </citation>
    <scope>NUCLEOTIDE SEQUENCE [LARGE SCALE GENOMIC DNA]</scope>
    <source>
        <strain>CCUG 32753 / NCTC 10114 / PG1</strain>
    </source>
</reference>
<name>ENGB_MYCMS</name>
<protein>
    <recommendedName>
        <fullName evidence="1">Probable GTP-binding protein EngB</fullName>
    </recommendedName>
</protein>
<gene>
    <name evidence="1" type="primary">engB</name>
    <name type="ordered locus">MSC_0290</name>
</gene>
<organism>
    <name type="scientific">Mycoplasma mycoides subsp. mycoides SC (strain CCUG 32753 / NCTC 10114 / PG1)</name>
    <dbReference type="NCBI Taxonomy" id="272632"/>
    <lineage>
        <taxon>Bacteria</taxon>
        <taxon>Bacillati</taxon>
        <taxon>Mycoplasmatota</taxon>
        <taxon>Mollicutes</taxon>
        <taxon>Mycoplasmataceae</taxon>
        <taxon>Mycoplasma</taxon>
    </lineage>
</organism>
<comment type="function">
    <text evidence="1">Necessary for normal cell division and for the maintenance of normal septation.</text>
</comment>
<comment type="cofactor">
    <cofactor evidence="1">
        <name>Mg(2+)</name>
        <dbReference type="ChEBI" id="CHEBI:18420"/>
    </cofactor>
</comment>
<comment type="similarity">
    <text evidence="1">Belongs to the TRAFAC class TrmE-Era-EngA-EngB-Septin-like GTPase superfamily. EngB GTPase family.</text>
</comment>
<evidence type="ECO:0000255" key="1">
    <source>
        <dbReference type="HAMAP-Rule" id="MF_00321"/>
    </source>
</evidence>
<keyword id="KW-0131">Cell cycle</keyword>
<keyword id="KW-0132">Cell division</keyword>
<keyword id="KW-0342">GTP-binding</keyword>
<keyword id="KW-0460">Magnesium</keyword>
<keyword id="KW-0479">Metal-binding</keyword>
<keyword id="KW-0547">Nucleotide-binding</keyword>
<keyword id="KW-1185">Reference proteome</keyword>
<keyword id="KW-0717">Septation</keyword>
<feature type="chain" id="PRO_0000266899" description="Probable GTP-binding protein EngB">
    <location>
        <begin position="1"/>
        <end position="196"/>
    </location>
</feature>
<feature type="domain" description="EngB-type G" evidence="1">
    <location>
        <begin position="21"/>
        <end position="195"/>
    </location>
</feature>
<feature type="binding site" evidence="1">
    <location>
        <begin position="29"/>
        <end position="36"/>
    </location>
    <ligand>
        <name>GTP</name>
        <dbReference type="ChEBI" id="CHEBI:37565"/>
    </ligand>
</feature>
<feature type="binding site" evidence="1">
    <location>
        <position position="36"/>
    </location>
    <ligand>
        <name>Mg(2+)</name>
        <dbReference type="ChEBI" id="CHEBI:18420"/>
    </ligand>
</feature>
<feature type="binding site" evidence="1">
    <location>
        <begin position="56"/>
        <end position="60"/>
    </location>
    <ligand>
        <name>GTP</name>
        <dbReference type="ChEBI" id="CHEBI:37565"/>
    </ligand>
</feature>
<feature type="binding site" evidence="1">
    <location>
        <position position="58"/>
    </location>
    <ligand>
        <name>Mg(2+)</name>
        <dbReference type="ChEBI" id="CHEBI:18420"/>
    </ligand>
</feature>
<feature type="binding site" evidence="1">
    <location>
        <begin position="75"/>
        <end position="78"/>
    </location>
    <ligand>
        <name>GTP</name>
        <dbReference type="ChEBI" id="CHEBI:37565"/>
    </ligand>
</feature>
<feature type="binding site" evidence="1">
    <location>
        <begin position="142"/>
        <end position="145"/>
    </location>
    <ligand>
        <name>GTP</name>
        <dbReference type="ChEBI" id="CHEBI:37565"/>
    </ligand>
</feature>
<feature type="binding site" evidence="1">
    <location>
        <begin position="174"/>
        <end position="176"/>
    </location>
    <ligand>
        <name>GTP</name>
        <dbReference type="ChEBI" id="CHEBI:37565"/>
    </ligand>
</feature>
<accession>Q6MTV5</accession>
<proteinExistence type="inferred from homology"/>